<keyword id="KW-0027">Amidation</keyword>
<keyword id="KW-0903">Direct protein sequencing</keyword>
<keyword id="KW-1015">Disulfide bond</keyword>
<keyword id="KW-0301">Gamma-carboxyglutamic acid</keyword>
<keyword id="KW-0872">Ion channel impairing toxin</keyword>
<keyword id="KW-0528">Neurotoxin</keyword>
<keyword id="KW-0632">Potassium channel impairing toxin</keyword>
<keyword id="KW-0964">Secreted</keyword>
<keyword id="KW-0800">Toxin</keyword>
<keyword id="KW-1220">Voltage-gated potassium channel impairing toxin</keyword>
<name>I2BA_CONSP</name>
<protein>
    <recommendedName>
        <fullName>Kappa-conotoxin SrXIA</fullName>
        <shortName>Kappa-SrXIA</shortName>
    </recommendedName>
    <alternativeName>
        <fullName>I2-superfamily conotoxin sr11a</fullName>
    </alternativeName>
</protein>
<evidence type="ECO:0000250" key="1">
    <source>
        <dbReference type="UniProtKB" id="Q7Z094"/>
    </source>
</evidence>
<evidence type="ECO:0000269" key="2">
    <source>
    </source>
</evidence>
<evidence type="ECO:0000269" key="3">
    <source>
    </source>
</evidence>
<evidence type="ECO:0000305" key="4"/>
<evidence type="ECO:0000305" key="5">
    <source>
    </source>
</evidence>
<sequence>CRTEGMSCEENQQCCWRSCCRGECEAPCRFGP</sequence>
<organism>
    <name type="scientific">Conus spurius</name>
    <name type="common">Alphabet cone</name>
    <dbReference type="NCBI Taxonomy" id="192919"/>
    <lineage>
        <taxon>Eukaryota</taxon>
        <taxon>Metazoa</taxon>
        <taxon>Spiralia</taxon>
        <taxon>Lophotrochozoa</taxon>
        <taxon>Mollusca</taxon>
        <taxon>Gastropoda</taxon>
        <taxon>Caenogastropoda</taxon>
        <taxon>Neogastropoda</taxon>
        <taxon>Conoidea</taxon>
        <taxon>Conidae</taxon>
        <taxon>Conus</taxon>
        <taxon>Lindaconus</taxon>
    </lineage>
</organism>
<feature type="chain" id="PRO_0000314091" description="Kappa-conotoxin SrXIA">
    <location>
        <begin position="1"/>
        <end position="32"/>
    </location>
</feature>
<feature type="site" description="Pharmacophore" evidence="4">
    <location>
        <position position="17"/>
    </location>
</feature>
<feature type="site" description="Pharmacophore" evidence="4">
    <location>
        <position position="29"/>
    </location>
</feature>
<feature type="modified residue" description="4-carboxyglutamate" evidence="2">
    <location>
        <position position="9"/>
    </location>
</feature>
<feature type="modified residue" description="4-carboxyglutamate" evidence="2">
    <location>
        <position position="10"/>
    </location>
</feature>
<feature type="modified residue" description="Proline amide" evidence="2">
    <location>
        <position position="32"/>
    </location>
</feature>
<feature type="disulfide bond" evidence="1">
    <location>
        <begin position="1"/>
        <end position="15"/>
    </location>
</feature>
<feature type="disulfide bond" evidence="1">
    <location>
        <begin position="8"/>
        <end position="20"/>
    </location>
</feature>
<feature type="disulfide bond" evidence="1">
    <location>
        <begin position="14"/>
        <end position="24"/>
    </location>
</feature>
<feature type="disulfide bond" evidence="1">
    <location>
        <begin position="19"/>
        <end position="28"/>
    </location>
</feature>
<dbReference type="SMR" id="P0C615"/>
<dbReference type="TCDB" id="8.B.16.1.5">
    <property type="family name" value="the maurocalcine (maca) family"/>
</dbReference>
<dbReference type="ConoServer" id="2802">
    <property type="toxin name" value="SrXIA"/>
</dbReference>
<dbReference type="GO" id="GO:0005576">
    <property type="term" value="C:extracellular region"/>
    <property type="evidence" value="ECO:0007669"/>
    <property type="project" value="UniProtKB-SubCell"/>
</dbReference>
<dbReference type="GO" id="GO:0015459">
    <property type="term" value="F:potassium channel regulator activity"/>
    <property type="evidence" value="ECO:0007669"/>
    <property type="project" value="UniProtKB-KW"/>
</dbReference>
<dbReference type="GO" id="GO:0090729">
    <property type="term" value="F:toxin activity"/>
    <property type="evidence" value="ECO:0007669"/>
    <property type="project" value="UniProtKB-KW"/>
</dbReference>
<dbReference type="InterPro" id="IPR013141">
    <property type="entry name" value="Conotoxin-I_CS"/>
</dbReference>
<dbReference type="InterPro" id="IPR020242">
    <property type="entry name" value="Conotoxin_I2"/>
</dbReference>
<dbReference type="Pfam" id="PF17557">
    <property type="entry name" value="Conotoxin_I2"/>
    <property type="match status" value="1"/>
</dbReference>
<dbReference type="PROSITE" id="PS60019">
    <property type="entry name" value="I_CONOTOXIN"/>
    <property type="match status" value="1"/>
</dbReference>
<comment type="function">
    <text evidence="2 3">Kappa-conotoxins bind and inhibit voltage-gated potassium channels. This toxin inhibits Kv1.2/KCNA2 and Kv1.6/KCNA6. Produces stiffening of body, limbs and tail when injected intracranially into mice.</text>
</comment>
<comment type="subcellular location">
    <subcellularLocation>
        <location evidence="2">Secreted</location>
    </subcellularLocation>
</comment>
<comment type="tissue specificity">
    <text evidence="2">Expressed by the venom duct.</text>
</comment>
<comment type="domain">
    <text>The cysteine framework is XI (C-C-CC-CC-C-C).</text>
</comment>
<comment type="mass spectrometry"/>
<comment type="miscellaneous">
    <text evidence="5">Negative results: has no effect on Kv1.3/KCNA3 channels.</text>
</comment>
<comment type="similarity">
    <text evidence="4">Belongs to the conotoxin I2 superfamily.</text>
</comment>
<proteinExistence type="evidence at protein level"/>
<reference key="1">
    <citation type="journal article" date="2007" name="Peptides">
        <title>I-conotoxins in vermivorous species of the West Atlantic: peptide sr11a from Conus spurius.</title>
        <authorList>
            <person name="Aguilar M.B."/>
            <person name="Lopez-Vera E."/>
            <person name="Heimer de la Cotera E.P."/>
            <person name="Falcon A."/>
            <person name="Olivera B.M."/>
            <person name="Maillo M."/>
        </authorList>
    </citation>
    <scope>PROTEIN SEQUENCE</scope>
    <scope>GAMMA-CARBOXYGLUTAMATION AT GLU-9</scope>
    <scope>GAMMA-CARBOXYGLUTAMATION AT GLU-10</scope>
    <scope>AMIDATION AT PRO-32</scope>
    <scope>FUNCTION</scope>
    <scope>SUBCELLULAR LOCATION</scope>
    <scope>TISSUE SPECIFICITY</scope>
    <scope>MASS SPECTROMETRY</scope>
    <source>
        <tissue>Venom</tissue>
    </source>
</reference>
<reference key="2">
    <citation type="journal article" date="2010" name="Peptides">
        <title>Peptide sr11a from Conus spurius is a novel peptide blocker for Kv1 potassium channels.</title>
        <authorList>
            <person name="Aguilar M.B."/>
            <person name="Perez-Reyes L.I."/>
            <person name="Lopez Z."/>
            <person name="de la Cotera E.P."/>
            <person name="Falcon A."/>
            <person name="Ayala C."/>
            <person name="Galvan M."/>
            <person name="Salvador C."/>
            <person name="Escobar L.I."/>
        </authorList>
    </citation>
    <scope>FUNCTION</scope>
    <scope>TOXIN TARGET</scope>
    <scope>3D-STRUCTURE MODELING</scope>
    <scope>SITES ARG-17 AND ARG-29</scope>
    <source>
        <tissue>Venom</tissue>
    </source>
</reference>
<accession>P0C615</accession>